<gene>
    <name evidence="1" type="primary">lutC</name>
    <name type="ordered locus">BCG9842_B3988</name>
</gene>
<dbReference type="EMBL" id="CP001186">
    <property type="protein sequence ID" value="ACK98259.1"/>
    <property type="molecule type" value="Genomic_DNA"/>
</dbReference>
<dbReference type="RefSeq" id="WP_000147194.1">
    <property type="nucleotide sequence ID" value="NC_011772.1"/>
</dbReference>
<dbReference type="SMR" id="B7IMD5"/>
<dbReference type="KEGG" id="bcg:BCG9842_B3988"/>
<dbReference type="HOGENOM" id="CLU_090664_1_0_9"/>
<dbReference type="Proteomes" id="UP000006744">
    <property type="component" value="Chromosome"/>
</dbReference>
<dbReference type="GO" id="GO:0006089">
    <property type="term" value="P:lactate metabolic process"/>
    <property type="evidence" value="ECO:0007669"/>
    <property type="project" value="UniProtKB-UniRule"/>
</dbReference>
<dbReference type="Gene3D" id="3.40.50.10420">
    <property type="entry name" value="NagB/RpiA/CoA transferase-like"/>
    <property type="match status" value="1"/>
</dbReference>
<dbReference type="HAMAP" id="MF_02104">
    <property type="entry name" value="LutC"/>
    <property type="match status" value="1"/>
</dbReference>
<dbReference type="InterPro" id="IPR024185">
    <property type="entry name" value="FTHF_cligase-like_sf"/>
</dbReference>
<dbReference type="InterPro" id="IPR003741">
    <property type="entry name" value="LUD_dom"/>
</dbReference>
<dbReference type="InterPro" id="IPR022823">
    <property type="entry name" value="LutC"/>
</dbReference>
<dbReference type="InterPro" id="IPR037171">
    <property type="entry name" value="NagB/RpiA_transferase-like"/>
</dbReference>
<dbReference type="PANTHER" id="PTHR43682">
    <property type="entry name" value="LACTATE UTILIZATION PROTEIN C"/>
    <property type="match status" value="1"/>
</dbReference>
<dbReference type="PANTHER" id="PTHR43682:SF1">
    <property type="entry name" value="LACTATE UTILIZATION PROTEIN C"/>
    <property type="match status" value="1"/>
</dbReference>
<dbReference type="Pfam" id="PF02589">
    <property type="entry name" value="LUD_dom"/>
    <property type="match status" value="1"/>
</dbReference>
<dbReference type="SUPFAM" id="SSF100950">
    <property type="entry name" value="NagB/RpiA/CoA transferase-like"/>
    <property type="match status" value="1"/>
</dbReference>
<proteinExistence type="inferred from homology"/>
<sequence length="236" mass="26391">MTGLIQNRDAFLDNIAKELGRARKTEGVERPVWKSNVNIETLKDYSQEELLEVFKNQCTNIHTTVVETTNERLREDLQQVIMENGGGPILLSADERFDAYGLTSLFKEELPKRDVEVNVWDPERKDGNMRLAEKANIGIAFSDYTLAESGTIVVQSHKGQGRSLHFLPTVYLAIIPRETLVPRITQAVQDMNSRVEDGETAASCINFITGPSNSADIEMNLVVGVHGPLKAIYFIV</sequence>
<feature type="chain" id="PRO_0000383995" description="Lactate utilization protein C">
    <location>
        <begin position="1"/>
        <end position="236"/>
    </location>
</feature>
<protein>
    <recommendedName>
        <fullName evidence="1">Lactate utilization protein C</fullName>
    </recommendedName>
</protein>
<name>LUTC_BACC2</name>
<comment type="function">
    <text evidence="1">Is involved in L-lactate degradation and allows cells to grow with lactate as the sole carbon source.</text>
</comment>
<comment type="similarity">
    <text evidence="1">Belongs to the LutC/YkgG family.</text>
</comment>
<accession>B7IMD5</accession>
<reference key="1">
    <citation type="submission" date="2008-10" db="EMBL/GenBank/DDBJ databases">
        <title>Genome sequence of Bacillus cereus G9842.</title>
        <authorList>
            <person name="Dodson R.J."/>
            <person name="Durkin A.S."/>
            <person name="Rosovitz M.J."/>
            <person name="Rasko D.A."/>
            <person name="Hoffmaster A."/>
            <person name="Ravel J."/>
            <person name="Sutton G."/>
        </authorList>
    </citation>
    <scope>NUCLEOTIDE SEQUENCE [LARGE SCALE GENOMIC DNA]</scope>
    <source>
        <strain>G9842</strain>
    </source>
</reference>
<organism>
    <name type="scientific">Bacillus cereus (strain G9842)</name>
    <dbReference type="NCBI Taxonomy" id="405531"/>
    <lineage>
        <taxon>Bacteria</taxon>
        <taxon>Bacillati</taxon>
        <taxon>Bacillota</taxon>
        <taxon>Bacilli</taxon>
        <taxon>Bacillales</taxon>
        <taxon>Bacillaceae</taxon>
        <taxon>Bacillus</taxon>
        <taxon>Bacillus cereus group</taxon>
    </lineage>
</organism>
<evidence type="ECO:0000255" key="1">
    <source>
        <dbReference type="HAMAP-Rule" id="MF_02104"/>
    </source>
</evidence>